<protein>
    <recommendedName>
        <fullName evidence="1">Glycine cleavage system H protein</fullName>
    </recommendedName>
</protein>
<sequence length="124" mass="13124">MSITRYTKDHEYIRVEGETGTVGITDYAQSQLGDVVFVELPAIGKALTKGGEAAVVESVKAASEIYAPVSGEVVAVNEALAEAPGTVNEDAAGKGWFLQIKLADAKELDGLMDEAGYQDFLKTL</sequence>
<accession>B2IGK2</accession>
<comment type="function">
    <text evidence="1">The glycine cleavage system catalyzes the degradation of glycine. The H protein shuttles the methylamine group of glycine from the P protein to the T protein.</text>
</comment>
<comment type="cofactor">
    <cofactor evidence="1">
        <name>(R)-lipoate</name>
        <dbReference type="ChEBI" id="CHEBI:83088"/>
    </cofactor>
    <text evidence="1">Binds 1 lipoyl cofactor covalently.</text>
</comment>
<comment type="subunit">
    <text evidence="1">The glycine cleavage system is composed of four proteins: P, T, L and H.</text>
</comment>
<comment type="similarity">
    <text evidence="1">Belongs to the GcvH family.</text>
</comment>
<dbReference type="EMBL" id="CP001016">
    <property type="protein sequence ID" value="ACB94384.1"/>
    <property type="molecule type" value="Genomic_DNA"/>
</dbReference>
<dbReference type="RefSeq" id="WP_012383741.1">
    <property type="nucleotide sequence ID" value="NC_010581.1"/>
</dbReference>
<dbReference type="SMR" id="B2IGK2"/>
<dbReference type="STRING" id="395963.Bind_0734"/>
<dbReference type="KEGG" id="bid:Bind_0734"/>
<dbReference type="eggNOG" id="COG0509">
    <property type="taxonomic scope" value="Bacteria"/>
</dbReference>
<dbReference type="HOGENOM" id="CLU_097408_2_0_5"/>
<dbReference type="OrthoDB" id="9796712at2"/>
<dbReference type="Proteomes" id="UP000001695">
    <property type="component" value="Chromosome"/>
</dbReference>
<dbReference type="GO" id="GO:0005829">
    <property type="term" value="C:cytosol"/>
    <property type="evidence" value="ECO:0007669"/>
    <property type="project" value="TreeGrafter"/>
</dbReference>
<dbReference type="GO" id="GO:0005960">
    <property type="term" value="C:glycine cleavage complex"/>
    <property type="evidence" value="ECO:0007669"/>
    <property type="project" value="InterPro"/>
</dbReference>
<dbReference type="GO" id="GO:0019464">
    <property type="term" value="P:glycine decarboxylation via glycine cleavage system"/>
    <property type="evidence" value="ECO:0007669"/>
    <property type="project" value="UniProtKB-UniRule"/>
</dbReference>
<dbReference type="CDD" id="cd06848">
    <property type="entry name" value="GCS_H"/>
    <property type="match status" value="1"/>
</dbReference>
<dbReference type="Gene3D" id="2.40.50.100">
    <property type="match status" value="1"/>
</dbReference>
<dbReference type="HAMAP" id="MF_00272">
    <property type="entry name" value="GcvH"/>
    <property type="match status" value="1"/>
</dbReference>
<dbReference type="InterPro" id="IPR003016">
    <property type="entry name" value="2-oxoA_DH_lipoyl-BS"/>
</dbReference>
<dbReference type="InterPro" id="IPR000089">
    <property type="entry name" value="Biotin_lipoyl"/>
</dbReference>
<dbReference type="InterPro" id="IPR002930">
    <property type="entry name" value="GCV_H"/>
</dbReference>
<dbReference type="InterPro" id="IPR033753">
    <property type="entry name" value="GCV_H/Fam206"/>
</dbReference>
<dbReference type="InterPro" id="IPR017453">
    <property type="entry name" value="GCV_H_sub"/>
</dbReference>
<dbReference type="InterPro" id="IPR011053">
    <property type="entry name" value="Single_hybrid_motif"/>
</dbReference>
<dbReference type="NCBIfam" id="TIGR00527">
    <property type="entry name" value="gcvH"/>
    <property type="match status" value="1"/>
</dbReference>
<dbReference type="NCBIfam" id="NF002270">
    <property type="entry name" value="PRK01202.1"/>
    <property type="match status" value="1"/>
</dbReference>
<dbReference type="PANTHER" id="PTHR11715">
    <property type="entry name" value="GLYCINE CLEAVAGE SYSTEM H PROTEIN"/>
    <property type="match status" value="1"/>
</dbReference>
<dbReference type="PANTHER" id="PTHR11715:SF3">
    <property type="entry name" value="GLYCINE CLEAVAGE SYSTEM H PROTEIN-RELATED"/>
    <property type="match status" value="1"/>
</dbReference>
<dbReference type="Pfam" id="PF01597">
    <property type="entry name" value="GCV_H"/>
    <property type="match status" value="1"/>
</dbReference>
<dbReference type="SUPFAM" id="SSF51230">
    <property type="entry name" value="Single hybrid motif"/>
    <property type="match status" value="1"/>
</dbReference>
<dbReference type="PROSITE" id="PS50968">
    <property type="entry name" value="BIOTINYL_LIPOYL"/>
    <property type="match status" value="1"/>
</dbReference>
<dbReference type="PROSITE" id="PS00189">
    <property type="entry name" value="LIPOYL"/>
    <property type="match status" value="1"/>
</dbReference>
<gene>
    <name evidence="1" type="primary">gcvH</name>
    <name type="ordered locus">Bind_0734</name>
</gene>
<proteinExistence type="inferred from homology"/>
<organism>
    <name type="scientific">Beijerinckia indica subsp. indica (strain ATCC 9039 / DSM 1715 / NCIMB 8712)</name>
    <dbReference type="NCBI Taxonomy" id="395963"/>
    <lineage>
        <taxon>Bacteria</taxon>
        <taxon>Pseudomonadati</taxon>
        <taxon>Pseudomonadota</taxon>
        <taxon>Alphaproteobacteria</taxon>
        <taxon>Hyphomicrobiales</taxon>
        <taxon>Beijerinckiaceae</taxon>
        <taxon>Beijerinckia</taxon>
    </lineage>
</organism>
<feature type="chain" id="PRO_1000114498" description="Glycine cleavage system H protein">
    <location>
        <begin position="1"/>
        <end position="124"/>
    </location>
</feature>
<feature type="domain" description="Lipoyl-binding" evidence="2">
    <location>
        <begin position="19"/>
        <end position="101"/>
    </location>
</feature>
<feature type="modified residue" description="N6-lipoyllysine" evidence="1">
    <location>
        <position position="60"/>
    </location>
</feature>
<keyword id="KW-0450">Lipoyl</keyword>
<keyword id="KW-1185">Reference proteome</keyword>
<reference key="1">
    <citation type="journal article" date="2010" name="J. Bacteriol.">
        <title>Complete genome sequence of Beijerinckia indica subsp. indica.</title>
        <authorList>
            <person name="Tamas I."/>
            <person name="Dedysh S.N."/>
            <person name="Liesack W."/>
            <person name="Stott M.B."/>
            <person name="Alam M."/>
            <person name="Murrell J.C."/>
            <person name="Dunfield P.F."/>
        </authorList>
    </citation>
    <scope>NUCLEOTIDE SEQUENCE [LARGE SCALE GENOMIC DNA]</scope>
    <source>
        <strain>ATCC 9039 / DSM 1715 / NCIMB 8712</strain>
    </source>
</reference>
<evidence type="ECO:0000255" key="1">
    <source>
        <dbReference type="HAMAP-Rule" id="MF_00272"/>
    </source>
</evidence>
<evidence type="ECO:0000255" key="2">
    <source>
        <dbReference type="PROSITE-ProRule" id="PRU01066"/>
    </source>
</evidence>
<name>GCSH_BEII9</name>